<reference key="1">
    <citation type="submission" date="2011-05" db="EMBL/GenBank/DDBJ databases">
        <title>Insights into the evolution of the great apes provided by the gorilla genome.</title>
        <authorList>
            <person name="Scally A."/>
        </authorList>
    </citation>
    <scope>NUCLEOTIDE SEQUENCE [LARGE SCALE GENOMIC DNA]</scope>
</reference>
<proteinExistence type="inferred from homology"/>
<feature type="chain" id="PRO_0000416058" description="Protein TOPAZ1">
    <location>
        <begin position="1"/>
        <end position="1694"/>
    </location>
</feature>
<feature type="region of interest" description="Disordered" evidence="2">
    <location>
        <begin position="1"/>
        <end position="135"/>
    </location>
</feature>
<feature type="region of interest" description="Disordered" evidence="2">
    <location>
        <begin position="322"/>
        <end position="341"/>
    </location>
</feature>
<feature type="region of interest" description="Disordered" evidence="2">
    <location>
        <begin position="600"/>
        <end position="629"/>
    </location>
</feature>
<feature type="region of interest" description="Disordered" evidence="2">
    <location>
        <begin position="891"/>
        <end position="920"/>
    </location>
</feature>
<feature type="compositionally biased region" description="Gly residues" evidence="2">
    <location>
        <begin position="31"/>
        <end position="40"/>
    </location>
</feature>
<feature type="compositionally biased region" description="Basic and acidic residues" evidence="2">
    <location>
        <begin position="95"/>
        <end position="116"/>
    </location>
</feature>
<feature type="compositionally biased region" description="Polar residues" evidence="2">
    <location>
        <begin position="603"/>
        <end position="627"/>
    </location>
</feature>
<feature type="compositionally biased region" description="Basic and acidic residues" evidence="2">
    <location>
        <begin position="903"/>
        <end position="920"/>
    </location>
</feature>
<sequence>MRRPPPLGPTTASGPEGNVRNLQKRQAPGPGAAGGCGPEAGGRRENKQKRRMVARATPGRGEVESDKSVAASGAGKAARRRVEGRRGQVSPSDSSDPRGLEAAKEAELPLQTERHTKEKRKVTEASSDDPQPGLDLVRKESLTSSESFQTVECLQSLGKESIIEGIKRRIRNKKLKSLENPPLKITENEATQNIKVEFQDELYKNTPKYSCNILSPEVENNSVLKLRDCNCFPHSKGCNDENNLPYKPDGGCMHVAENFSKKENLRSLAEKSDTNSIPQLLQTEENVMEVNKLLPEESDLYQSKTNGLLSCLQHEKNKYSIEESSVGRKPRKRMKLSEKADETVTEMNFSNEYNKSELMLQENQMIADGKEAETKSPLNVLRKVSHNTVSLMDHLLSVPETVEKETSSEHHVNAVFQKTIEPLLKEETESTSEPLGYESMASKEDFKSMKSFIGKSPNEYHIERRSSREDLRSASEELNLSCQRTIPMTGKRTWPCYSCARISAWCWKKASLPESSYFFPGSQESYRQVDVPKHQTNQTHLTDSKLLLQSSLTETNTESSSKEKLDSNSNCLSSVSAVEPTLMVIKEPIIKDDKKIKSEELSRSGSEVISNTTEDTQLTSETQSLTGNKKKARGNLMKLNLTATSKDGQEANNSAGKTIHRKACIAQQTFIVPDLVKILNTGRLTNFKIPLLKNKTEKRKEVNAKSSEREAYSPLELLDNLSGADIRQNRSKENVSMTMLGPQTLSIRNSVTPVQASSDSFYNKKSYSISPSFTKQGNNSKPSNHVSEPGNIVSNKEVASLTVENNAFSCDPGYVEKSPSFCCNEQETFRPVSSEVRGRKITKNFSEVGFPDILKAYEDDILLIDVIQDDPDLFGVSNEGELSFTSEVPKISQEEPNVAGEHQSTDSKYMETPVKKEPSDDLRELPVLDCGWIKPDICASNSAESEIKHDPKDVNTSLGEVANETSENETLGDFSEQIKGSDLDEKHRFTDKVITKEEKENIYEVCKSKDSRNADIMVGECQFAVPVPKPLCLLVPPLNLSGRQEDTILNTWMNGTICFLNEILLAFGNIETRRFFYQKQKTIKVFQKSLGLMIPYKYCKFHFNTLRGCERPLCKFAHVPEQGDEKVCMDVFKKYININELCLLQRAVNIFMEYYRKFPPGVYFDLQVLNDLLNSLLKHCLLKEVFQIVNLSIMVKMLPSLKILLNIFEYVATMKLRNAVPALIDIFCKLVEAGMVLDPEHFNYIVKLLYQVQASKQEITAVLEMKSRLQMRQFKKNWKCDLHSALNKLEHCKEKGDWTKLGKLYINVKMGCEKFADFQTFCACIAETLTKNYEDERPDIPFCEFAETVSKDPQNSKVDKGVLGRIGISAMCFYHKLLQWSKGRKVLEKLYELKIHFTSLKGLIGPEKLASRCQIVNVAAEIFLKSGSLDGAIWVMRESEWIINTPLWPCDRLDVLNRHNLLCTIAHEILAKSLYRQTFEVLQNLPGFQNSQETVEVSQYSLLFNKLLGSCIESSSLGMSSSVAEFMISKSIPIDFSFLRRLITSLGRSCLWLKARAHYKSALSLGCYPPLEGNLYRKLLLIPSYLSEIEMLLAIEIFMVSNASSIQSPGTSTQILQIVLKRCEDNQSRSSDDYQAAVERLIMAARISDPKLFVKHMTVNVNKEQVYSLEHCSALKWLKENMKWAGKVWLFSNH</sequence>
<dbReference type="FunCoup" id="G3S077">
    <property type="interactions" value="46"/>
</dbReference>
<dbReference type="STRING" id="9593.ENSGGOP00000021471"/>
<dbReference type="eggNOG" id="ENOG502QPIV">
    <property type="taxonomic scope" value="Eukaryota"/>
</dbReference>
<dbReference type="HOGENOM" id="CLU_003190_0_0_1"/>
<dbReference type="InParanoid" id="G3S077"/>
<dbReference type="Proteomes" id="UP000001519">
    <property type="component" value="Unplaced"/>
</dbReference>
<dbReference type="GO" id="GO:0005829">
    <property type="term" value="C:cytosol"/>
    <property type="evidence" value="ECO:0007669"/>
    <property type="project" value="UniProtKB-SubCell"/>
</dbReference>
<dbReference type="GO" id="GO:0030154">
    <property type="term" value="P:cell differentiation"/>
    <property type="evidence" value="ECO:0007669"/>
    <property type="project" value="UniProtKB-KW"/>
</dbReference>
<dbReference type="GO" id="GO:0048137">
    <property type="term" value="P:spermatocyte division"/>
    <property type="evidence" value="ECO:0000318"/>
    <property type="project" value="GO_Central"/>
</dbReference>
<dbReference type="InterPro" id="IPR038952">
    <property type="entry name" value="TOPAZ1"/>
</dbReference>
<dbReference type="InterPro" id="IPR029435">
    <property type="entry name" value="TOPAZ1_dom"/>
</dbReference>
<dbReference type="PANTHER" id="PTHR35671">
    <property type="entry name" value="PROTEIN TOPAZ1"/>
    <property type="match status" value="1"/>
</dbReference>
<dbReference type="PANTHER" id="PTHR35671:SF1">
    <property type="entry name" value="PROTEIN TOPAZ1"/>
    <property type="match status" value="1"/>
</dbReference>
<dbReference type="Pfam" id="PF14669">
    <property type="entry name" value="Asp_Glu_race_2"/>
    <property type="match status" value="1"/>
</dbReference>
<keyword id="KW-0963">Cytoplasm</keyword>
<keyword id="KW-0221">Differentiation</keyword>
<keyword id="KW-1185">Reference proteome</keyword>
<keyword id="KW-0744">Spermatogenesis</keyword>
<organism>
    <name type="scientific">Gorilla gorilla gorilla</name>
    <name type="common">Western lowland gorilla</name>
    <dbReference type="NCBI Taxonomy" id="9595"/>
    <lineage>
        <taxon>Eukaryota</taxon>
        <taxon>Metazoa</taxon>
        <taxon>Chordata</taxon>
        <taxon>Craniata</taxon>
        <taxon>Vertebrata</taxon>
        <taxon>Euteleostomi</taxon>
        <taxon>Mammalia</taxon>
        <taxon>Eutheria</taxon>
        <taxon>Euarchontoglires</taxon>
        <taxon>Primates</taxon>
        <taxon>Haplorrhini</taxon>
        <taxon>Catarrhini</taxon>
        <taxon>Hominidae</taxon>
        <taxon>Gorilla</taxon>
    </lineage>
</organism>
<protein>
    <recommendedName>
        <fullName evidence="1">Protein TOPAZ1</fullName>
    </recommendedName>
    <alternativeName>
        <fullName evidence="1">Testis- and ovary-specific PAZ domain-containing protein 1</fullName>
    </alternativeName>
</protein>
<evidence type="ECO:0000250" key="1">
    <source>
        <dbReference type="UniProtKB" id="E5FYH1"/>
    </source>
</evidence>
<evidence type="ECO:0000256" key="2">
    <source>
        <dbReference type="SAM" id="MobiDB-lite"/>
    </source>
</evidence>
<accession>G3S077</accession>
<gene>
    <name type="primary">TOPAZ1</name>
</gene>
<name>TOPZ1_GORGO</name>
<comment type="function">
    <text evidence="1">Important for normal spermatogenesis and male fertility. Specifically required for progression to the post-meiotic stages of spermatocyte development. Seems to be necessary for normal expression levels of a number of testis-expressed gene transcripts, although its role in this process is unclear.</text>
</comment>
<comment type="subcellular location">
    <subcellularLocation>
        <location evidence="1">Cytoplasm</location>
        <location evidence="1">Cytosol</location>
    </subcellularLocation>
</comment>